<dbReference type="EC" id="7.1.1.6"/>
<dbReference type="EMBL" id="AY267656">
    <property type="protein sequence ID" value="AAP79170.1"/>
    <property type="molecule type" value="mRNA"/>
</dbReference>
<dbReference type="SMR" id="Q7XYM4"/>
<dbReference type="OMA" id="FTPWTET"/>
<dbReference type="GO" id="GO:0009535">
    <property type="term" value="C:chloroplast thylakoid membrane"/>
    <property type="evidence" value="ECO:0007669"/>
    <property type="project" value="UniProtKB-SubCell"/>
</dbReference>
<dbReference type="GO" id="GO:0051537">
    <property type="term" value="F:2 iron, 2 sulfur cluster binding"/>
    <property type="evidence" value="ECO:0007669"/>
    <property type="project" value="UniProtKB-KW"/>
</dbReference>
<dbReference type="GO" id="GO:0046872">
    <property type="term" value="F:metal ion binding"/>
    <property type="evidence" value="ECO:0007669"/>
    <property type="project" value="UniProtKB-KW"/>
</dbReference>
<dbReference type="GO" id="GO:0009496">
    <property type="term" value="F:plastoquinol--plastocyanin reductase activity"/>
    <property type="evidence" value="ECO:0007669"/>
    <property type="project" value="UniProtKB-EC"/>
</dbReference>
<dbReference type="CDD" id="cd03471">
    <property type="entry name" value="Rieske_cytochrome_b6f"/>
    <property type="match status" value="1"/>
</dbReference>
<dbReference type="FunFam" id="2.102.10.10:FF:000007">
    <property type="entry name" value="Cytochrome b6-f complex iron-sulfur subunit"/>
    <property type="match status" value="1"/>
</dbReference>
<dbReference type="Gene3D" id="2.102.10.10">
    <property type="entry name" value="Rieske [2Fe-2S] iron-sulphur domain"/>
    <property type="match status" value="1"/>
</dbReference>
<dbReference type="Gene3D" id="1.20.5.700">
    <property type="entry name" value="Single helix bin"/>
    <property type="match status" value="1"/>
</dbReference>
<dbReference type="InterPro" id="IPR017941">
    <property type="entry name" value="Rieske_2Fe-2S"/>
</dbReference>
<dbReference type="InterPro" id="IPR036922">
    <property type="entry name" value="Rieske_2Fe-2S_sf"/>
</dbReference>
<dbReference type="InterPro" id="IPR014349">
    <property type="entry name" value="Rieske_Fe-S_prot"/>
</dbReference>
<dbReference type="InterPro" id="IPR005805">
    <property type="entry name" value="Rieske_Fe-S_prot_C"/>
</dbReference>
<dbReference type="NCBIfam" id="NF010001">
    <property type="entry name" value="PRK13474.1"/>
    <property type="match status" value="1"/>
</dbReference>
<dbReference type="PANTHER" id="PTHR10134">
    <property type="entry name" value="CYTOCHROME B-C1 COMPLEX SUBUNIT RIESKE, MITOCHONDRIAL"/>
    <property type="match status" value="1"/>
</dbReference>
<dbReference type="Pfam" id="PF00355">
    <property type="entry name" value="Rieske"/>
    <property type="match status" value="1"/>
</dbReference>
<dbReference type="Pfam" id="PF25471">
    <property type="entry name" value="TM_PetC"/>
    <property type="match status" value="1"/>
</dbReference>
<dbReference type="PRINTS" id="PR00162">
    <property type="entry name" value="RIESKE"/>
</dbReference>
<dbReference type="SUPFAM" id="SSF50022">
    <property type="entry name" value="ISP domain"/>
    <property type="match status" value="1"/>
</dbReference>
<dbReference type="PROSITE" id="PS51296">
    <property type="entry name" value="RIESKE"/>
    <property type="match status" value="1"/>
</dbReference>
<gene>
    <name type="primary">petC</name>
</gene>
<proteinExistence type="evidence at transcript level"/>
<accession>Q7XYM4</accession>
<sequence>MAQSRSLLLSIAVNALLVGVLLYSVAVNRTQEGSLQLSAVRGKIAAPRTSFQNAVSRVSRNQLPSSSRKAVAQAFLSNPDMVPDMGKRKLMNNLVLAAVAPVVASAGGCYLYYFYPPQTGGGGGAVGALDALGNPVSAESWFKSHKKNARDLVQGIKGDPTYLIVNDDGSTLNSYGLNAICTHLGCVVPWDAASNKFKCPCHGSQYAPDGHVVRGPAPRPLQLAHVEDDNGKILLSPWTETDFRTGEKPWWA</sequence>
<reference key="1">
    <citation type="journal article" date="2003" name="Proc. Natl. Acad. Sci. U.S.A.">
        <title>Lateral gene transfer and the evolution of plastid-targeted proteins in the secondary plastid-containing alga Bigelowiella natans.</title>
        <authorList>
            <person name="Archibald J.M."/>
            <person name="Rogers M.B."/>
            <person name="Toop M."/>
            <person name="Ishida K."/>
            <person name="Keeling P.J."/>
        </authorList>
    </citation>
    <scope>NUCLEOTIDE SEQUENCE [MRNA]</scope>
</reference>
<comment type="function">
    <text evidence="1">Component of the cytochrome b6-f complex, which mediates electron transfer between photosystem II (PSII) and photosystem I (PSI), cyclic electron flow around PSI, and state transitions.</text>
</comment>
<comment type="catalytic activity">
    <reaction>
        <text>2 oxidized [plastocyanin] + a plastoquinol + 2 H(+)(in) = 2 reduced [plastocyanin] + a plastoquinone + 4 H(+)(out)</text>
        <dbReference type="Rhea" id="RHEA:22148"/>
        <dbReference type="Rhea" id="RHEA-COMP:9561"/>
        <dbReference type="Rhea" id="RHEA-COMP:9562"/>
        <dbReference type="Rhea" id="RHEA-COMP:10039"/>
        <dbReference type="Rhea" id="RHEA-COMP:10040"/>
        <dbReference type="ChEBI" id="CHEBI:15378"/>
        <dbReference type="ChEBI" id="CHEBI:17757"/>
        <dbReference type="ChEBI" id="CHEBI:29036"/>
        <dbReference type="ChEBI" id="CHEBI:49552"/>
        <dbReference type="ChEBI" id="CHEBI:62192"/>
        <dbReference type="EC" id="7.1.1.6"/>
    </reaction>
</comment>
<comment type="cofactor">
    <cofactor evidence="3">
        <name>[2Fe-2S] cluster</name>
        <dbReference type="ChEBI" id="CHEBI:190135"/>
    </cofactor>
    <text evidence="3">Binds 1 [2Fe-2S] cluster per subunit.</text>
</comment>
<comment type="subunit">
    <text evidence="1">The 4 large subunits of the cytochrome b6-f complex are cytochrome b6, subunit IV (17 kDa polypeptide, petD), cytochrome f and the Rieske protein, while the 4 small subunits are petG, petL, petM and petN. The complex functions as a dimer (By similarity).</text>
</comment>
<comment type="subcellular location">
    <subcellularLocation>
        <location evidence="1">Plastid</location>
        <location evidence="1">Chloroplast thylakoid membrane</location>
        <topology evidence="1">Single-pass membrane protein</topology>
    </subcellularLocation>
    <text evidence="1">The transmembrane helix obliquely spans the membrane in one monomer, and its extrinsic C-terminal domain is part of the other monomer.</text>
</comment>
<comment type="miscellaneous">
    <text>This protein is 1 of 2 subunits of the cytochrome b6-f complex that are encoded in the nucleus.</text>
</comment>
<comment type="miscellaneous">
    <text>The Rieske iron-sulfur protein is a high potential 2Fe-2S protein.</text>
</comment>
<comment type="similarity">
    <text evidence="4">Belongs to the Rieske iron-sulfur protein family.</text>
</comment>
<name>UCRIA_BIGNA</name>
<protein>
    <recommendedName>
        <fullName>Cytochrome b6-f complex iron-sulfur subunit, chloroplastic</fullName>
        <ecNumber>7.1.1.6</ecNumber>
    </recommendedName>
    <alternativeName>
        <fullName>Plastohydroquinone:plastocyanin oxidoreductase iron-sulfur protein</fullName>
    </alternativeName>
    <alternativeName>
        <fullName>Rieske iron-sulfur protein</fullName>
        <shortName>ISP</shortName>
        <shortName>RISP</shortName>
    </alternativeName>
</protein>
<feature type="transit peptide" description="Chloroplast" evidence="2">
    <location>
        <begin position="1"/>
        <end status="unknown"/>
    </location>
</feature>
<feature type="chain" id="PRO_0000030686" description="Cytochrome b6-f complex iron-sulfur subunit, chloroplastic">
    <location>
        <begin status="unknown"/>
        <end position="252"/>
    </location>
</feature>
<feature type="transmembrane region" description="Helical" evidence="2">
    <location>
        <begin position="94"/>
        <end position="114"/>
    </location>
</feature>
<feature type="domain" description="Rieske" evidence="3">
    <location>
        <begin position="141"/>
        <end position="235"/>
    </location>
</feature>
<feature type="binding site" evidence="3">
    <location>
        <position position="181"/>
    </location>
    <ligand>
        <name>[2Fe-2S] cluster</name>
        <dbReference type="ChEBI" id="CHEBI:190135"/>
    </ligand>
</feature>
<feature type="binding site" evidence="3">
    <location>
        <position position="183"/>
    </location>
    <ligand>
        <name>[2Fe-2S] cluster</name>
        <dbReference type="ChEBI" id="CHEBI:190135"/>
    </ligand>
</feature>
<feature type="binding site" evidence="3">
    <location>
        <position position="199"/>
    </location>
    <ligand>
        <name>[2Fe-2S] cluster</name>
        <dbReference type="ChEBI" id="CHEBI:190135"/>
    </ligand>
</feature>
<feature type="binding site" evidence="3">
    <location>
        <position position="202"/>
    </location>
    <ligand>
        <name>[2Fe-2S] cluster</name>
        <dbReference type="ChEBI" id="CHEBI:190135"/>
    </ligand>
</feature>
<feature type="disulfide bond" evidence="3">
    <location>
        <begin position="186"/>
        <end position="201"/>
    </location>
</feature>
<keyword id="KW-0001">2Fe-2S</keyword>
<keyword id="KW-0150">Chloroplast</keyword>
<keyword id="KW-1015">Disulfide bond</keyword>
<keyword id="KW-0249">Electron transport</keyword>
<keyword id="KW-0408">Iron</keyword>
<keyword id="KW-0411">Iron-sulfur</keyword>
<keyword id="KW-0472">Membrane</keyword>
<keyword id="KW-0479">Metal-binding</keyword>
<keyword id="KW-0934">Plastid</keyword>
<keyword id="KW-0793">Thylakoid</keyword>
<keyword id="KW-0809">Transit peptide</keyword>
<keyword id="KW-1278">Translocase</keyword>
<keyword id="KW-0812">Transmembrane</keyword>
<keyword id="KW-1133">Transmembrane helix</keyword>
<keyword id="KW-0813">Transport</keyword>
<evidence type="ECO:0000250" key="1"/>
<evidence type="ECO:0000255" key="2"/>
<evidence type="ECO:0000255" key="3">
    <source>
        <dbReference type="PROSITE-ProRule" id="PRU00628"/>
    </source>
</evidence>
<evidence type="ECO:0000305" key="4"/>
<organism>
    <name type="scientific">Bigelowiella natans</name>
    <name type="common">Pedinomonas minutissima</name>
    <name type="synonym">Chlorarachnion sp. (strain CCMP621)</name>
    <dbReference type="NCBI Taxonomy" id="227086"/>
    <lineage>
        <taxon>Eukaryota</taxon>
        <taxon>Sar</taxon>
        <taxon>Rhizaria</taxon>
        <taxon>Cercozoa</taxon>
        <taxon>Chlorarachniophyceae</taxon>
        <taxon>Bigelowiella</taxon>
    </lineage>
</organism>